<comment type="function">
    <text evidence="1">Catalyzes the attachment of valine to tRNA(Val). As ValRS can inadvertently accommodate and process structurally similar amino acids such as threonine, to avoid such errors, it has a 'posttransfer' editing activity that hydrolyzes mischarged Thr-tRNA(Val) in a tRNA-dependent manner.</text>
</comment>
<comment type="catalytic activity">
    <reaction evidence="1">
        <text>tRNA(Val) + L-valine + ATP = L-valyl-tRNA(Val) + AMP + diphosphate</text>
        <dbReference type="Rhea" id="RHEA:10704"/>
        <dbReference type="Rhea" id="RHEA-COMP:9672"/>
        <dbReference type="Rhea" id="RHEA-COMP:9708"/>
        <dbReference type="ChEBI" id="CHEBI:30616"/>
        <dbReference type="ChEBI" id="CHEBI:33019"/>
        <dbReference type="ChEBI" id="CHEBI:57762"/>
        <dbReference type="ChEBI" id="CHEBI:78442"/>
        <dbReference type="ChEBI" id="CHEBI:78537"/>
        <dbReference type="ChEBI" id="CHEBI:456215"/>
        <dbReference type="EC" id="6.1.1.9"/>
    </reaction>
</comment>
<comment type="subunit">
    <text evidence="1">Monomer.</text>
</comment>
<comment type="subcellular location">
    <subcellularLocation>
        <location evidence="1">Cytoplasm</location>
    </subcellularLocation>
</comment>
<comment type="domain">
    <text evidence="1">ValRS has two distinct active sites: one for aminoacylation and one for editing. The misactivated threonine is translocated from the active site to the editing site.</text>
</comment>
<comment type="domain">
    <text evidence="1">The C-terminal coiled-coil domain is crucial for aminoacylation activity.</text>
</comment>
<comment type="similarity">
    <text evidence="1">Belongs to the class-I aminoacyl-tRNA synthetase family. ValS type 1 subfamily.</text>
</comment>
<reference key="1">
    <citation type="journal article" date="2003" name="Nucleic Acids Res.">
        <title>Genome sequence of Chlamydophila caviae (Chlamydia psittaci GPIC): examining the role of niche-specific genes in the evolution of the Chlamydiaceae.</title>
        <authorList>
            <person name="Read T.D."/>
            <person name="Myers G.S.A."/>
            <person name="Brunham R.C."/>
            <person name="Nelson W.C."/>
            <person name="Paulsen I.T."/>
            <person name="Heidelberg J.F."/>
            <person name="Holtzapple E.K."/>
            <person name="Khouri H.M."/>
            <person name="Federova N.B."/>
            <person name="Carty H.A."/>
            <person name="Umayam L.A."/>
            <person name="Haft D.H."/>
            <person name="Peterson J.D."/>
            <person name="Beanan M.J."/>
            <person name="White O."/>
            <person name="Salzberg S.L."/>
            <person name="Hsia R.-C."/>
            <person name="McClarty G."/>
            <person name="Rank R.G."/>
            <person name="Bavoil P.M."/>
            <person name="Fraser C.M."/>
        </authorList>
    </citation>
    <scope>NUCLEOTIDE SEQUENCE [LARGE SCALE GENOMIC DNA]</scope>
    <source>
        <strain>ATCC VR-813 / DSM 19441 / 03DC25 / GPIC</strain>
    </source>
</reference>
<keyword id="KW-0030">Aminoacyl-tRNA synthetase</keyword>
<keyword id="KW-0067">ATP-binding</keyword>
<keyword id="KW-0175">Coiled coil</keyword>
<keyword id="KW-0963">Cytoplasm</keyword>
<keyword id="KW-0436">Ligase</keyword>
<keyword id="KW-0547">Nucleotide-binding</keyword>
<keyword id="KW-0648">Protein biosynthesis</keyword>
<accession>Q822K4</accession>
<feature type="chain" id="PRO_0000224458" description="Valine--tRNA ligase">
    <location>
        <begin position="1"/>
        <end position="940"/>
    </location>
</feature>
<feature type="coiled-coil region" evidence="1">
    <location>
        <begin position="872"/>
        <end position="938"/>
    </location>
</feature>
<feature type="short sequence motif" description="'HIGH' region">
    <location>
        <begin position="47"/>
        <end position="57"/>
    </location>
</feature>
<feature type="short sequence motif" description="'KMSKS' region">
    <location>
        <begin position="564"/>
        <end position="568"/>
    </location>
</feature>
<feature type="binding site" evidence="1">
    <location>
        <position position="567"/>
    </location>
    <ligand>
        <name>ATP</name>
        <dbReference type="ChEBI" id="CHEBI:30616"/>
    </ligand>
</feature>
<proteinExistence type="inferred from homology"/>
<name>SYV_CHLCV</name>
<evidence type="ECO:0000255" key="1">
    <source>
        <dbReference type="HAMAP-Rule" id="MF_02004"/>
    </source>
</evidence>
<organism>
    <name type="scientific">Chlamydia caviae (strain ATCC VR-813 / DSM 19441 / 03DC25 / GPIC)</name>
    <name type="common">Chlamydophila caviae</name>
    <dbReference type="NCBI Taxonomy" id="227941"/>
    <lineage>
        <taxon>Bacteria</taxon>
        <taxon>Pseudomonadati</taxon>
        <taxon>Chlamydiota</taxon>
        <taxon>Chlamydiia</taxon>
        <taxon>Chlamydiales</taxon>
        <taxon>Chlamydiaceae</taxon>
        <taxon>Chlamydia/Chlamydophila group</taxon>
        <taxon>Chlamydia</taxon>
    </lineage>
</organism>
<gene>
    <name evidence="1" type="primary">valS</name>
    <name type="ordered locus">CCA_00678</name>
</gene>
<dbReference type="EC" id="6.1.1.9" evidence="1"/>
<dbReference type="EMBL" id="AE015925">
    <property type="protein sequence ID" value="AAP05420.1"/>
    <property type="molecule type" value="Genomic_DNA"/>
</dbReference>
<dbReference type="RefSeq" id="WP_011006635.1">
    <property type="nucleotide sequence ID" value="NC_003361.3"/>
</dbReference>
<dbReference type="SMR" id="Q822K4"/>
<dbReference type="STRING" id="227941.CCA_00678"/>
<dbReference type="KEGG" id="cca:CCA_00678"/>
<dbReference type="eggNOG" id="COG0525">
    <property type="taxonomic scope" value="Bacteria"/>
</dbReference>
<dbReference type="HOGENOM" id="CLU_001493_0_2_0"/>
<dbReference type="OrthoDB" id="9810365at2"/>
<dbReference type="Proteomes" id="UP000002193">
    <property type="component" value="Chromosome"/>
</dbReference>
<dbReference type="GO" id="GO:0005829">
    <property type="term" value="C:cytosol"/>
    <property type="evidence" value="ECO:0007669"/>
    <property type="project" value="TreeGrafter"/>
</dbReference>
<dbReference type="GO" id="GO:0002161">
    <property type="term" value="F:aminoacyl-tRNA deacylase activity"/>
    <property type="evidence" value="ECO:0007669"/>
    <property type="project" value="InterPro"/>
</dbReference>
<dbReference type="GO" id="GO:0005524">
    <property type="term" value="F:ATP binding"/>
    <property type="evidence" value="ECO:0007669"/>
    <property type="project" value="UniProtKB-UniRule"/>
</dbReference>
<dbReference type="GO" id="GO:0004832">
    <property type="term" value="F:valine-tRNA ligase activity"/>
    <property type="evidence" value="ECO:0007669"/>
    <property type="project" value="UniProtKB-UniRule"/>
</dbReference>
<dbReference type="GO" id="GO:0006438">
    <property type="term" value="P:valyl-tRNA aminoacylation"/>
    <property type="evidence" value="ECO:0007669"/>
    <property type="project" value="UniProtKB-UniRule"/>
</dbReference>
<dbReference type="CDD" id="cd07962">
    <property type="entry name" value="Anticodon_Ia_Val"/>
    <property type="match status" value="1"/>
</dbReference>
<dbReference type="CDD" id="cd00817">
    <property type="entry name" value="ValRS_core"/>
    <property type="match status" value="1"/>
</dbReference>
<dbReference type="FunFam" id="3.40.50.620:FF:000032">
    <property type="entry name" value="Valine--tRNA ligase"/>
    <property type="match status" value="1"/>
</dbReference>
<dbReference type="FunFam" id="3.40.50.620:FF:000306">
    <property type="entry name" value="Valine--tRNA ligase"/>
    <property type="match status" value="1"/>
</dbReference>
<dbReference type="FunFam" id="3.90.740.10:FF:000010">
    <property type="entry name" value="Valine--tRNA ligase"/>
    <property type="match status" value="1"/>
</dbReference>
<dbReference type="Gene3D" id="3.40.50.620">
    <property type="entry name" value="HUPs"/>
    <property type="match status" value="2"/>
</dbReference>
<dbReference type="Gene3D" id="1.10.730.10">
    <property type="entry name" value="Isoleucyl-tRNA Synthetase, Domain 1"/>
    <property type="match status" value="1"/>
</dbReference>
<dbReference type="Gene3D" id="1.10.287.380">
    <property type="entry name" value="Valyl-tRNA synthetase, C-terminal domain"/>
    <property type="match status" value="1"/>
</dbReference>
<dbReference type="Gene3D" id="3.90.740.10">
    <property type="entry name" value="Valyl/Leucyl/Isoleucyl-tRNA synthetase, editing domain"/>
    <property type="match status" value="1"/>
</dbReference>
<dbReference type="HAMAP" id="MF_02004">
    <property type="entry name" value="Val_tRNA_synth_type1"/>
    <property type="match status" value="1"/>
</dbReference>
<dbReference type="InterPro" id="IPR001412">
    <property type="entry name" value="aa-tRNA-synth_I_CS"/>
</dbReference>
<dbReference type="InterPro" id="IPR002300">
    <property type="entry name" value="aa-tRNA-synth_Ia"/>
</dbReference>
<dbReference type="InterPro" id="IPR033705">
    <property type="entry name" value="Anticodon_Ia_Val"/>
</dbReference>
<dbReference type="InterPro" id="IPR013155">
    <property type="entry name" value="M/V/L/I-tRNA-synth_anticd-bd"/>
</dbReference>
<dbReference type="InterPro" id="IPR014729">
    <property type="entry name" value="Rossmann-like_a/b/a_fold"/>
</dbReference>
<dbReference type="InterPro" id="IPR010978">
    <property type="entry name" value="tRNA-bd_arm"/>
</dbReference>
<dbReference type="InterPro" id="IPR009080">
    <property type="entry name" value="tRNAsynth_Ia_anticodon-bd"/>
</dbReference>
<dbReference type="InterPro" id="IPR037118">
    <property type="entry name" value="Val-tRNA_synth_C_sf"/>
</dbReference>
<dbReference type="InterPro" id="IPR019499">
    <property type="entry name" value="Val-tRNA_synth_tRNA-bd"/>
</dbReference>
<dbReference type="InterPro" id="IPR009008">
    <property type="entry name" value="Val/Leu/Ile-tRNA-synth_edit"/>
</dbReference>
<dbReference type="InterPro" id="IPR002303">
    <property type="entry name" value="Valyl-tRNA_ligase"/>
</dbReference>
<dbReference type="NCBIfam" id="NF004349">
    <property type="entry name" value="PRK05729.1"/>
    <property type="match status" value="1"/>
</dbReference>
<dbReference type="NCBIfam" id="TIGR00422">
    <property type="entry name" value="valS"/>
    <property type="match status" value="1"/>
</dbReference>
<dbReference type="PANTHER" id="PTHR11946:SF93">
    <property type="entry name" value="VALINE--TRNA LIGASE, CHLOROPLASTIC_MITOCHONDRIAL 2"/>
    <property type="match status" value="1"/>
</dbReference>
<dbReference type="PANTHER" id="PTHR11946">
    <property type="entry name" value="VALYL-TRNA SYNTHETASES"/>
    <property type="match status" value="1"/>
</dbReference>
<dbReference type="Pfam" id="PF08264">
    <property type="entry name" value="Anticodon_1"/>
    <property type="match status" value="1"/>
</dbReference>
<dbReference type="Pfam" id="PF00133">
    <property type="entry name" value="tRNA-synt_1"/>
    <property type="match status" value="2"/>
</dbReference>
<dbReference type="Pfam" id="PF10458">
    <property type="entry name" value="Val_tRNA-synt_C"/>
    <property type="match status" value="1"/>
</dbReference>
<dbReference type="PRINTS" id="PR00986">
    <property type="entry name" value="TRNASYNTHVAL"/>
</dbReference>
<dbReference type="SUPFAM" id="SSF47323">
    <property type="entry name" value="Anticodon-binding domain of a subclass of class I aminoacyl-tRNA synthetases"/>
    <property type="match status" value="1"/>
</dbReference>
<dbReference type="SUPFAM" id="SSF52374">
    <property type="entry name" value="Nucleotidylyl transferase"/>
    <property type="match status" value="1"/>
</dbReference>
<dbReference type="SUPFAM" id="SSF46589">
    <property type="entry name" value="tRNA-binding arm"/>
    <property type="match status" value="1"/>
</dbReference>
<dbReference type="SUPFAM" id="SSF50677">
    <property type="entry name" value="ValRS/IleRS/LeuRS editing domain"/>
    <property type="match status" value="1"/>
</dbReference>
<dbReference type="PROSITE" id="PS00178">
    <property type="entry name" value="AA_TRNA_LIGASE_I"/>
    <property type="match status" value="1"/>
</dbReference>
<sequence length="940" mass="107370">MEEDEFSKAYDPKGLEDKLYAFWEGSGMFTAQSASDKPPYAIIMPPPNVTGILHMGHALVNTLQDVLIRYKRMSGFEVCWVPGTDHAGIATQTVVERHLYASLGKRRIDFSREEFIKHVWEWKEKSEGVILSQLRQLGCSCDWSRLRFTMEPLANRAVKKAFKALFDKGHIYRGYYLVNWDPVLQTALADDEVEYEEKDGWLYYIRYKVVDSSEEIIVATTRPETLLGDTAIAISPDDERYSHLLGAKVHLPFVDREIPIIGDMSVDPLFGTGAVKITPAHDRDDYRTGINHNLPMVNILAPTGEINENGGIFAGLSKEKAREDIITALEAMGLFVKKEPYKLRVGVSYRSGAVIEPYLSKQWFVSVESFRDSLREFVANDSIKIFPPEFTRNYLSWVNNLRDWCISRQLWWGHRIPVWYHKSDEDRILCYDGEGIPEEVAQDPDSWYQDPDVLDTWFSSGLWPLTCLGWPDVESGDLEKFYPTAVLITGHDILFFWVTRMVLLCSAMVEEKPFSDVFLHGLIFGKSYKRYNDLGEWTYISGEEKHAYDMGKALPKDVVAKWEKLSKSKGNVIDPLEMIGKYGADAVRMTLCSCANRGEQIDLDYRLFEEYKNFANKIWNGARFIFGHISNLTSKDLVYGIDKDLLGLEDFYILDGFNQLLKQLESAYQSYAFDKITTMAYEFFRNDFCSTYIEIIKPTLYGKQGNEEDRLTKQKLLAVLLVNILGVLHPITPFVTETLFLKLKATLGDVDAPCADTITAHALDMLRAESYVVAPYPQAIDIAIPKDLHESFALAERLVYTIRNIRGEMQLDPRASLEVFVICPEGISIETYVPMMCALGGIASLEYLSEEPKDRVYSLGVVEGIRLGVFVPMEHITKERNRLEKEKMRLENSIESVSRLLSSESFRAKANPDLVRSKEETLKNNRMELQSILDKLASFS</sequence>
<protein>
    <recommendedName>
        <fullName evidence="1">Valine--tRNA ligase</fullName>
        <ecNumber evidence="1">6.1.1.9</ecNumber>
    </recommendedName>
    <alternativeName>
        <fullName evidence="1">Valyl-tRNA synthetase</fullName>
        <shortName evidence="1">ValRS</shortName>
    </alternativeName>
</protein>